<keyword id="KW-0217">Developmental protein</keyword>
<keyword id="KW-0238">DNA-binding</keyword>
<keyword id="KW-0371">Homeobox</keyword>
<keyword id="KW-0539">Nucleus</keyword>
<keyword id="KW-1185">Reference proteome</keyword>
<keyword id="KW-0804">Transcription</keyword>
<keyword id="KW-0805">Transcription regulation</keyword>
<dbReference type="EMBL" id="X68324">
    <property type="protein sequence ID" value="CAA48399.1"/>
    <property type="molecule type" value="Genomic_DNA"/>
</dbReference>
<dbReference type="EMBL" id="DQ060553">
    <property type="protein sequence ID" value="AAY67931.1"/>
    <property type="molecule type" value="mRNA"/>
</dbReference>
<dbReference type="EMBL" id="M18470">
    <property type="protein sequence ID" value="AAA50029.1"/>
    <property type="molecule type" value="Genomic_DNA"/>
</dbReference>
<dbReference type="EMBL" id="Y14539">
    <property type="protein sequence ID" value="CAA74874.1"/>
    <property type="molecule type" value="mRNA"/>
</dbReference>
<dbReference type="PIR" id="S48125">
    <property type="entry name" value="S48125"/>
</dbReference>
<dbReference type="SMR" id="P09074"/>
<dbReference type="FunCoup" id="P09074">
    <property type="interactions" value="176"/>
</dbReference>
<dbReference type="STRING" id="7955.ENSDARP00000121862"/>
<dbReference type="PaxDb" id="7955-ENSDARP00000093908"/>
<dbReference type="AGR" id="ZFIN:ZDB-GENE-980526-533"/>
<dbReference type="ZFIN" id="ZDB-GENE-980526-533">
    <property type="gene designation" value="hoxc5a"/>
</dbReference>
<dbReference type="eggNOG" id="KOG0489">
    <property type="taxonomic scope" value="Eukaryota"/>
</dbReference>
<dbReference type="InParanoid" id="P09074"/>
<dbReference type="PRO" id="PR:P09074"/>
<dbReference type="Proteomes" id="UP000000437">
    <property type="component" value="Unplaced"/>
</dbReference>
<dbReference type="GO" id="GO:0005634">
    <property type="term" value="C:nucleus"/>
    <property type="evidence" value="ECO:0000318"/>
    <property type="project" value="GO_Central"/>
</dbReference>
<dbReference type="GO" id="GO:0000981">
    <property type="term" value="F:DNA-binding transcription factor activity, RNA polymerase II-specific"/>
    <property type="evidence" value="ECO:0000318"/>
    <property type="project" value="GO_Central"/>
</dbReference>
<dbReference type="GO" id="GO:0000978">
    <property type="term" value="F:RNA polymerase II cis-regulatory region sequence-specific DNA binding"/>
    <property type="evidence" value="ECO:0000318"/>
    <property type="project" value="GO_Central"/>
</dbReference>
<dbReference type="GO" id="GO:0009952">
    <property type="term" value="P:anterior/posterior pattern specification"/>
    <property type="evidence" value="ECO:0000318"/>
    <property type="project" value="GO_Central"/>
</dbReference>
<dbReference type="GO" id="GO:0006357">
    <property type="term" value="P:regulation of transcription by RNA polymerase II"/>
    <property type="evidence" value="ECO:0000318"/>
    <property type="project" value="GO_Central"/>
</dbReference>
<dbReference type="CDD" id="cd00086">
    <property type="entry name" value="homeodomain"/>
    <property type="match status" value="1"/>
</dbReference>
<dbReference type="FunFam" id="1.10.10.60:FF:000055">
    <property type="entry name" value="Homeobox protein Hox-A5"/>
    <property type="match status" value="1"/>
</dbReference>
<dbReference type="Gene3D" id="1.10.10.60">
    <property type="entry name" value="Homeodomain-like"/>
    <property type="match status" value="1"/>
</dbReference>
<dbReference type="InterPro" id="IPR050296">
    <property type="entry name" value="Antp_homeobox"/>
</dbReference>
<dbReference type="InterPro" id="IPR001356">
    <property type="entry name" value="HD"/>
</dbReference>
<dbReference type="InterPro" id="IPR020479">
    <property type="entry name" value="HD_metazoa"/>
</dbReference>
<dbReference type="InterPro" id="IPR017995">
    <property type="entry name" value="Homeobox_antennapedia"/>
</dbReference>
<dbReference type="InterPro" id="IPR001827">
    <property type="entry name" value="Homeobox_Antennapedia_CS"/>
</dbReference>
<dbReference type="InterPro" id="IPR017970">
    <property type="entry name" value="Homeobox_CS"/>
</dbReference>
<dbReference type="InterPro" id="IPR009057">
    <property type="entry name" value="Homeodomain-like_sf"/>
</dbReference>
<dbReference type="PANTHER" id="PTHR45659">
    <property type="entry name" value="HOMEOBOX PROTEIN HOX"/>
    <property type="match status" value="1"/>
</dbReference>
<dbReference type="PANTHER" id="PTHR45659:SF10">
    <property type="entry name" value="HOMEOBOX PROTEIN HOX-A5"/>
    <property type="match status" value="1"/>
</dbReference>
<dbReference type="Pfam" id="PF00046">
    <property type="entry name" value="Homeodomain"/>
    <property type="match status" value="1"/>
</dbReference>
<dbReference type="PRINTS" id="PR00025">
    <property type="entry name" value="ANTENNAPEDIA"/>
</dbReference>
<dbReference type="PRINTS" id="PR00024">
    <property type="entry name" value="HOMEOBOX"/>
</dbReference>
<dbReference type="SMART" id="SM00389">
    <property type="entry name" value="HOX"/>
    <property type="match status" value="1"/>
</dbReference>
<dbReference type="SUPFAM" id="SSF46689">
    <property type="entry name" value="Homeodomain-like"/>
    <property type="match status" value="1"/>
</dbReference>
<dbReference type="PROSITE" id="PS00032">
    <property type="entry name" value="ANTENNAPEDIA"/>
    <property type="match status" value="1"/>
</dbReference>
<dbReference type="PROSITE" id="PS00027">
    <property type="entry name" value="HOMEOBOX_1"/>
    <property type="match status" value="1"/>
</dbReference>
<dbReference type="PROSITE" id="PS50071">
    <property type="entry name" value="HOMEOBOX_2"/>
    <property type="match status" value="1"/>
</dbReference>
<gene>
    <name type="primary">hoxc5a</name>
    <name type="synonym">hox-3.4</name>
    <name type="synonym">hoxc5</name>
    <name type="synonym">zf25</name>
</gene>
<protein>
    <recommendedName>
        <fullName>Homeobox protein Hox-C5a</fullName>
        <shortName>Hox-C5</shortName>
    </recommendedName>
    <alternativeName>
        <fullName>Homeobox protein Hox-3.4</fullName>
    </alternativeName>
    <alternativeName>
        <fullName>Homeobox protein Zf-25</fullName>
    </alternativeName>
</protein>
<accession>P09074</accession>
<accession>O57368</accession>
<accession>Q4PR90</accession>
<sequence length="232" mass="26909">MSSYVGKSFSKQTQDASSCRMHTFDNYGAHSEFHESNYAYEGLDLGGSFSSQIPTNSLRREAINTTDRARSSAAVQRTQSCSALGSRSFVSTHGYNPLSHGLLSQKAEGNMEVMEKPSGKSSRRYQNGDYFSDKQQTNSTQRQNQSQPQIYPWMTKLHMSHESDGKRSRTSYTRYQTLELEKEFHFNRYLTRRRRIEIANNLCLNERQIKIWFQNRRMKWKKDSKLKVKGGL</sequence>
<comment type="function">
    <text>Sequence-specific transcription factor which is part of a developmental regulatory system that provides cells with specific positional identities on the anterior-posterior axis.</text>
</comment>
<comment type="subcellular location">
    <subcellularLocation>
        <location>Nucleus</location>
    </subcellularLocation>
</comment>
<comment type="developmental stage">
    <text evidence="3">At the 10-somite stage, barely expressed in the paraxial mesoderm. At the 20-somite stage, expressed in the developing CNS with an anterior expression limit at somite 1.</text>
</comment>
<comment type="similarity">
    <text evidence="4">Belongs to the Antp homeobox family.</text>
</comment>
<reference key="1">
    <citation type="journal article" date="1993" name="Int. J. Dev. Biol.">
        <title>Genomic sequence and embryonic expression of the zebrafish homeobox gene hox-3.4.</title>
        <authorList>
            <person name="Ericson J.U."/>
            <person name="Krauss S."/>
            <person name="Fjose A."/>
        </authorList>
    </citation>
    <scope>NUCLEOTIDE SEQUENCE [GENOMIC DNA]</scope>
</reference>
<reference key="2">
    <citation type="journal article" date="2005" name="Evol. Dev.">
        <title>Genomic annotation and transcriptome analysis of the zebrafish (Danio rerio) hox complex with description of a novel member, hoxb13a.</title>
        <authorList>
            <person name="Corredor-Adamez M."/>
            <person name="Welten M.C.M."/>
            <person name="Spaink H.P."/>
            <person name="Jeffery J.E."/>
            <person name="Schoon R.T."/>
            <person name="de Bakker M.A.G."/>
            <person name="Bagowski C.P."/>
            <person name="Meijer A.H."/>
            <person name="Verbeek F.J."/>
            <person name="Richardson M.K."/>
        </authorList>
    </citation>
    <scope>NUCLEOTIDE SEQUENCE [MRNA] OF 74-174</scope>
    <source>
        <strain>Tuebingen</strain>
    </source>
</reference>
<reference key="3">
    <citation type="journal article" date="1987" name="Biochem. Biophys. Res. Commun.">
        <title>A zebrafish homeobox-containing gene with embryonic transcription.</title>
        <authorList>
            <person name="Eiken H.G."/>
            <person name="Njolstad P.R."/>
            <person name="Molven A."/>
            <person name="Fjose A."/>
        </authorList>
    </citation>
    <scope>NUCLEOTIDE SEQUENCE [GENOMIC DNA] OF 165-232</scope>
</reference>
<reference key="4">
    <citation type="journal article" date="1998" name="Development">
        <title>Zebrafish hox genes: genomic organization and modified colinear expression patterns in the trunk.</title>
        <authorList>
            <person name="Prince V.E."/>
            <person name="Joly L."/>
            <person name="Ekker M."/>
            <person name="Ho R.K."/>
        </authorList>
    </citation>
    <scope>NUCLEOTIDE SEQUENCE [MRNA] OF 194-232</scope>
    <scope>DEVELOPMENTAL STAGE</scope>
    <source>
        <tissue>Embryo</tissue>
    </source>
</reference>
<name>HXC5A_DANRE</name>
<evidence type="ECO:0000255" key="1">
    <source>
        <dbReference type="PROSITE-ProRule" id="PRU00108"/>
    </source>
</evidence>
<evidence type="ECO:0000256" key="2">
    <source>
        <dbReference type="SAM" id="MobiDB-lite"/>
    </source>
</evidence>
<evidence type="ECO:0000269" key="3">
    <source>
    </source>
</evidence>
<evidence type="ECO:0000305" key="4"/>
<proteinExistence type="evidence at transcript level"/>
<feature type="chain" id="PRO_0000200171" description="Homeobox protein Hox-C5a">
    <location>
        <begin position="1"/>
        <end position="232"/>
    </location>
</feature>
<feature type="DNA-binding region" description="Homeobox" evidence="1">
    <location>
        <begin position="165"/>
        <end position="224"/>
    </location>
</feature>
<feature type="region of interest" description="Disordered" evidence="2">
    <location>
        <begin position="112"/>
        <end position="148"/>
    </location>
</feature>
<feature type="short sequence motif" description="Antp-type hexapeptide">
    <location>
        <begin position="150"/>
        <end position="155"/>
    </location>
</feature>
<feature type="compositionally biased region" description="Low complexity" evidence="2">
    <location>
        <begin position="135"/>
        <end position="148"/>
    </location>
</feature>
<feature type="sequence conflict" description="In Ref. 2." evidence="4" ref="2">
    <original>SRRYQNGDYFSD</original>
    <variation>RTDDIKMETTSAI</variation>
    <location>
        <begin position="122"/>
        <end position="133"/>
    </location>
</feature>
<feature type="sequence conflict" description="In Ref. 4; CAA74874." evidence="4" ref="4">
    <original>G</original>
    <variation>A</variation>
    <location>
        <position position="230"/>
    </location>
</feature>
<organism>
    <name type="scientific">Danio rerio</name>
    <name type="common">Zebrafish</name>
    <name type="synonym">Brachydanio rerio</name>
    <dbReference type="NCBI Taxonomy" id="7955"/>
    <lineage>
        <taxon>Eukaryota</taxon>
        <taxon>Metazoa</taxon>
        <taxon>Chordata</taxon>
        <taxon>Craniata</taxon>
        <taxon>Vertebrata</taxon>
        <taxon>Euteleostomi</taxon>
        <taxon>Actinopterygii</taxon>
        <taxon>Neopterygii</taxon>
        <taxon>Teleostei</taxon>
        <taxon>Ostariophysi</taxon>
        <taxon>Cypriniformes</taxon>
        <taxon>Danionidae</taxon>
        <taxon>Danioninae</taxon>
        <taxon>Danio</taxon>
    </lineage>
</organism>